<gene>
    <name evidence="3" type="primary">hopBA1</name>
</gene>
<sequence length="239" mass="25407">MLNRISSSSPTSYVSSGSSSAGINPSINVRPPRGGPVDTLVGAASDNNLVYIGDEHGKLFIPKLITESAAKLKNAGVDHLAVEFVKHSDGAAFREALSDGKSAVKHFLEASWGRHGDAWLDKVSEALCSAHRAGIYVSGIDRKMAIDQPKTPMQKILYMKKRLALNVAWDAAATREASAVCANKSIVWGGAGHFSNSKTDGPKDMRPGLVISFDLTGRGSSRINDADEHSHIVIAGEDN</sequence>
<keyword id="KW-0002">3D-structure</keyword>
<keyword id="KW-0964">Secreted</keyword>
<keyword id="KW-0843">Virulence</keyword>
<protein>
    <recommendedName>
        <fullName evidence="3">Type III effector protein HopBA1</fullName>
    </recommendedName>
</protein>
<evidence type="ECO:0000256" key="1">
    <source>
        <dbReference type="SAM" id="MobiDB-lite"/>
    </source>
</evidence>
<evidence type="ECO:0000269" key="2">
    <source>
    </source>
</evidence>
<evidence type="ECO:0000303" key="3">
    <source>
    </source>
</evidence>
<evidence type="ECO:0000305" key="4">
    <source>
    </source>
</evidence>
<evidence type="ECO:0007744" key="5">
    <source>
        <dbReference type="PDB" id="5T09"/>
    </source>
</evidence>
<evidence type="ECO:0007829" key="6">
    <source>
        <dbReference type="PDB" id="5T09"/>
    </source>
</evidence>
<comment type="function">
    <text evidence="2">Virulence factor recognized by the A.thaliana disease resistance protein RBA1, which triggers plant cell death (PubMed:28137883). HopBA1 enhances RBA1 self-association, which is necessary for ectopic autoactivation of host cell death (PubMed:28137883).</text>
</comment>
<comment type="subcellular location">
    <subcellularLocation>
        <location evidence="2">Secreted</location>
    </subcellularLocation>
    <subcellularLocation>
        <location evidence="2">Host cell</location>
    </subcellularLocation>
    <text evidence="4">Secreted via the type III secretion system (T3SS).</text>
</comment>
<dbReference type="EMBL" id="HM641787">
    <property type="protein sequence ID" value="ADQ74895.1"/>
    <property type="molecule type" value="Genomic_DNA"/>
</dbReference>
<dbReference type="PDB" id="5T09">
    <property type="method" value="X-ray"/>
    <property type="resolution" value="2.01 A"/>
    <property type="chains" value="A=1-239"/>
</dbReference>
<dbReference type="PDBsum" id="5T09"/>
<dbReference type="SMR" id="E5G0U4"/>
<dbReference type="GO" id="GO:0005576">
    <property type="term" value="C:extracellular region"/>
    <property type="evidence" value="ECO:0007669"/>
    <property type="project" value="UniProtKB-SubCell"/>
</dbReference>
<dbReference type="GO" id="GO:0043657">
    <property type="term" value="C:host cell"/>
    <property type="evidence" value="ECO:0007669"/>
    <property type="project" value="UniProtKB-SubCell"/>
</dbReference>
<dbReference type="Gene3D" id="3.40.50.11550">
    <property type="match status" value="1"/>
</dbReference>
<dbReference type="InterPro" id="IPR054303">
    <property type="entry name" value="HopBA1"/>
</dbReference>
<dbReference type="Pfam" id="PF22079">
    <property type="entry name" value="HopBA1"/>
    <property type="match status" value="1"/>
</dbReference>
<name>HPBA1_PSEAP</name>
<feature type="chain" id="PRO_0000460869" description="Type III effector protein HopBA1">
    <location>
        <begin position="1"/>
        <end position="239"/>
    </location>
</feature>
<feature type="region of interest" description="Disordered" evidence="1">
    <location>
        <begin position="1"/>
        <end position="31"/>
    </location>
</feature>
<feature type="compositionally biased region" description="Low complexity" evidence="1">
    <location>
        <begin position="1"/>
        <end position="20"/>
    </location>
</feature>
<feature type="mutagenesis site" description="Translocated into the host plant cell but loses the ability to trigger host cell death." evidence="2">
    <original>H</original>
    <variation>A</variation>
    <variation>F</variation>
    <location>
        <position position="56"/>
    </location>
</feature>
<feature type="mutagenesis site" description="Not translocated into the host plant cell and loses the ability to trigger host cell death." evidence="2">
    <original>E</original>
    <variation>A</variation>
    <location>
        <position position="83"/>
    </location>
</feature>
<feature type="mutagenesis site" description="Not translocated into the host plant cell and loses the ability to trigger host cell death." evidence="2">
    <original>F</original>
    <variation>A</variation>
    <location>
        <position position="84"/>
    </location>
</feature>
<feature type="mutagenesis site" description="Translocated into the host plant cell but loses the ability to trigger host cell death." evidence="2">
    <original>W</original>
    <variation>A</variation>
    <location>
        <position position="112"/>
    </location>
</feature>
<feature type="mutagenesis site" description="Translocated into the host plant cell but loses the ability to trigger host cell death." evidence="2">
    <original>Y</original>
    <variation>A</variation>
    <variation>F</variation>
    <location>
        <position position="158"/>
    </location>
</feature>
<feature type="mutagenesis site" description="Translocated into the host plant cell but loses the ability to trigger host cell death." evidence="2">
    <original>R</original>
    <variation>A</variation>
    <location>
        <position position="162"/>
    </location>
</feature>
<feature type="mutagenesis site" description="Not translocated into the host plant cell and loses the ability to trigger host cell death." evidence="2">
    <original>W</original>
    <variation>A</variation>
    <location>
        <position position="169"/>
    </location>
</feature>
<feature type="mutagenesis site" description="Not translocated into the host plant cell and loses the ability to trigger host cell death." evidence="2">
    <original>H</original>
    <variation>A</variation>
    <location>
        <position position="193"/>
    </location>
</feature>
<feature type="helix" evidence="6">
    <location>
        <begin position="36"/>
        <end position="46"/>
    </location>
</feature>
<feature type="strand" evidence="6">
    <location>
        <begin position="48"/>
        <end position="54"/>
    </location>
</feature>
<feature type="helix" evidence="6">
    <location>
        <begin position="60"/>
        <end position="74"/>
    </location>
</feature>
<feature type="strand" evidence="6">
    <location>
        <begin position="77"/>
        <end position="86"/>
    </location>
</feature>
<feature type="helix" evidence="6">
    <location>
        <begin position="87"/>
        <end position="89"/>
    </location>
</feature>
<feature type="helix" evidence="6">
    <location>
        <begin position="90"/>
        <end position="99"/>
    </location>
</feature>
<feature type="helix" evidence="6">
    <location>
        <begin position="101"/>
        <end position="112"/>
    </location>
</feature>
<feature type="helix" evidence="6">
    <location>
        <begin position="113"/>
        <end position="115"/>
    </location>
</feature>
<feature type="helix" evidence="6">
    <location>
        <begin position="117"/>
        <end position="132"/>
    </location>
</feature>
<feature type="strand" evidence="6">
    <location>
        <begin position="136"/>
        <end position="141"/>
    </location>
</feature>
<feature type="helix" evidence="6">
    <location>
        <begin position="152"/>
        <end position="163"/>
    </location>
</feature>
<feature type="helix" evidence="6">
    <location>
        <begin position="166"/>
        <end position="179"/>
    </location>
</feature>
<feature type="strand" evidence="6">
    <location>
        <begin position="183"/>
        <end position="190"/>
    </location>
</feature>
<feature type="helix" evidence="6">
    <location>
        <begin position="191"/>
        <end position="194"/>
    </location>
</feature>
<feature type="turn" evidence="6">
    <location>
        <begin position="198"/>
        <end position="200"/>
    </location>
</feature>
<feature type="strand" evidence="6">
    <location>
        <begin position="209"/>
        <end position="214"/>
    </location>
</feature>
<feature type="strand" evidence="6">
    <location>
        <begin position="216"/>
        <end position="219"/>
    </location>
</feature>
<feature type="strand" evidence="6">
    <location>
        <begin position="221"/>
        <end position="223"/>
    </location>
</feature>
<feature type="strand" evidence="6">
    <location>
        <begin position="231"/>
        <end position="235"/>
    </location>
</feature>
<reference key="1">
    <citation type="submission" date="2010-07" db="EMBL/GenBank/DDBJ databases">
        <title>Dynamic Evolution of Pathogenicity Revealed by Sequencing and Comparative Genomics of 19 Pseudomonas syringae Isolates.</title>
        <authorList>
            <person name="Baltrus D.A."/>
            <person name="Nishimura M.T."/>
            <person name="Romanchuk A."/>
            <person name="Chang J.H."/>
            <person name="Cherkis K."/>
            <person name="Jones C.D."/>
            <person name="Dangl J.L."/>
        </authorList>
    </citation>
    <scope>NUCLEOTIDE SEQUENCE [GENOMIC DNA]</scope>
    <source>
        <strain>DSM 50252</strain>
    </source>
</reference>
<reference evidence="5" key="2">
    <citation type="journal article" date="2017" name="Proc. Natl. Acad. Sci. U.S.A.">
        <title>TIR-only protein RBA1 recognizes a pathogen effector to regulate cell death in Arabidopsis.</title>
        <authorList>
            <person name="Nishimura M.T."/>
            <person name="Anderson R.G."/>
            <person name="Cherkis K.A."/>
            <person name="Law T.F."/>
            <person name="Liu Q.L."/>
            <person name="Machius M."/>
            <person name="Nimchuk Z.L."/>
            <person name="Yang L."/>
            <person name="Chung E.H."/>
            <person name="El Kasmi F."/>
            <person name="Hyunh M."/>
            <person name="Osborne Nishimura E."/>
            <person name="Sondek J.E."/>
            <person name="Dangl J.L."/>
        </authorList>
    </citation>
    <scope>X-RAY CRYSTALLOGRAPHY (2.01 ANGSTROMS)</scope>
    <scope>FUNCTION</scope>
    <scope>SUBCELLULAR LOCATION</scope>
    <scope>MUTAGENESIS OF HIS-56; GLU-83; PHE-84; TRP-112; TYR-158; ARG-162; TRP-169 AND HIS-193</scope>
</reference>
<accession>E5G0U4</accession>
<proteinExistence type="evidence at protein level"/>
<organism>
    <name type="scientific">Pseudomonas syringae pv. aptata</name>
    <dbReference type="NCBI Taxonomy" id="83167"/>
    <lineage>
        <taxon>Bacteria</taxon>
        <taxon>Pseudomonadati</taxon>
        <taxon>Pseudomonadota</taxon>
        <taxon>Gammaproteobacteria</taxon>
        <taxon>Pseudomonadales</taxon>
        <taxon>Pseudomonadaceae</taxon>
        <taxon>Pseudomonas</taxon>
        <taxon>Pseudomonas syringae</taxon>
    </lineage>
</organism>